<sequence length="238" mass="26537">MATLGVNIDHIANVRQARKTVEPDPVQFAFLAELGGADSITVHLREDRRHIQDRDVFLLKETIKTKLNLEMAATKEMLEIAKKILPDYVTLVPEKREEVTTEGGLDLKSNVQYLKKAVGSLKDSNIEVSAFIDPLSEQINYSKEIGFDFIELHTGKYAELSGSNQHKELQRIIESTHIANDLGLVVNAGHGLNYNNVRKIASINNMNELNIGHSIVARALAIGLEKSVREMKSLITLN</sequence>
<proteinExistence type="inferred from homology"/>
<name>PDXJ_PROMS</name>
<dbReference type="EC" id="2.6.99.2" evidence="1"/>
<dbReference type="EMBL" id="CP000551">
    <property type="protein sequence ID" value="ABM70497.1"/>
    <property type="molecule type" value="Genomic_DNA"/>
</dbReference>
<dbReference type="RefSeq" id="WP_011818644.1">
    <property type="nucleotide sequence ID" value="NC_008816.1"/>
</dbReference>
<dbReference type="SMR" id="A2BRT6"/>
<dbReference type="STRING" id="146891.A9601_12131"/>
<dbReference type="KEGG" id="pmb:A9601_12131"/>
<dbReference type="eggNOG" id="COG0854">
    <property type="taxonomic scope" value="Bacteria"/>
</dbReference>
<dbReference type="HOGENOM" id="CLU_074563_0_0_3"/>
<dbReference type="OrthoDB" id="9806590at2"/>
<dbReference type="UniPathway" id="UPA00244">
    <property type="reaction ID" value="UER00313"/>
</dbReference>
<dbReference type="Proteomes" id="UP000002590">
    <property type="component" value="Chromosome"/>
</dbReference>
<dbReference type="GO" id="GO:0005829">
    <property type="term" value="C:cytosol"/>
    <property type="evidence" value="ECO:0007669"/>
    <property type="project" value="TreeGrafter"/>
</dbReference>
<dbReference type="GO" id="GO:0033856">
    <property type="term" value="F:pyridoxine 5'-phosphate synthase activity"/>
    <property type="evidence" value="ECO:0007669"/>
    <property type="project" value="UniProtKB-EC"/>
</dbReference>
<dbReference type="GO" id="GO:0008615">
    <property type="term" value="P:pyridoxine biosynthetic process"/>
    <property type="evidence" value="ECO:0007669"/>
    <property type="project" value="UniProtKB-UniRule"/>
</dbReference>
<dbReference type="CDD" id="cd00003">
    <property type="entry name" value="PNPsynthase"/>
    <property type="match status" value="1"/>
</dbReference>
<dbReference type="Gene3D" id="3.20.20.70">
    <property type="entry name" value="Aldolase class I"/>
    <property type="match status" value="1"/>
</dbReference>
<dbReference type="HAMAP" id="MF_00279">
    <property type="entry name" value="PdxJ"/>
    <property type="match status" value="1"/>
</dbReference>
<dbReference type="InterPro" id="IPR013785">
    <property type="entry name" value="Aldolase_TIM"/>
</dbReference>
<dbReference type="InterPro" id="IPR004569">
    <property type="entry name" value="PyrdxlP_synth_PdxJ"/>
</dbReference>
<dbReference type="InterPro" id="IPR036130">
    <property type="entry name" value="Pyridoxine-5'_phos_synth"/>
</dbReference>
<dbReference type="NCBIfam" id="TIGR00559">
    <property type="entry name" value="pdxJ"/>
    <property type="match status" value="1"/>
</dbReference>
<dbReference type="NCBIfam" id="NF003625">
    <property type="entry name" value="PRK05265.1-3"/>
    <property type="match status" value="1"/>
</dbReference>
<dbReference type="NCBIfam" id="NF003627">
    <property type="entry name" value="PRK05265.1-5"/>
    <property type="match status" value="1"/>
</dbReference>
<dbReference type="PANTHER" id="PTHR30456">
    <property type="entry name" value="PYRIDOXINE 5'-PHOSPHATE SYNTHASE"/>
    <property type="match status" value="1"/>
</dbReference>
<dbReference type="PANTHER" id="PTHR30456:SF0">
    <property type="entry name" value="PYRIDOXINE 5'-PHOSPHATE SYNTHASE"/>
    <property type="match status" value="1"/>
</dbReference>
<dbReference type="Pfam" id="PF03740">
    <property type="entry name" value="PdxJ"/>
    <property type="match status" value="1"/>
</dbReference>
<dbReference type="SUPFAM" id="SSF63892">
    <property type="entry name" value="Pyridoxine 5'-phosphate synthase"/>
    <property type="match status" value="1"/>
</dbReference>
<comment type="function">
    <text evidence="1">Catalyzes the complicated ring closure reaction between the two acyclic compounds 1-deoxy-D-xylulose-5-phosphate (DXP) and 3-amino-2-oxopropyl phosphate (1-amino-acetone-3-phosphate or AAP) to form pyridoxine 5'-phosphate (PNP) and inorganic phosphate.</text>
</comment>
<comment type="catalytic activity">
    <reaction evidence="1">
        <text>3-amino-2-oxopropyl phosphate + 1-deoxy-D-xylulose 5-phosphate = pyridoxine 5'-phosphate + phosphate + 2 H2O + H(+)</text>
        <dbReference type="Rhea" id="RHEA:15265"/>
        <dbReference type="ChEBI" id="CHEBI:15377"/>
        <dbReference type="ChEBI" id="CHEBI:15378"/>
        <dbReference type="ChEBI" id="CHEBI:43474"/>
        <dbReference type="ChEBI" id="CHEBI:57279"/>
        <dbReference type="ChEBI" id="CHEBI:57792"/>
        <dbReference type="ChEBI" id="CHEBI:58589"/>
        <dbReference type="EC" id="2.6.99.2"/>
    </reaction>
</comment>
<comment type="pathway">
    <text evidence="1">Cofactor biosynthesis; pyridoxine 5'-phosphate biosynthesis; pyridoxine 5'-phosphate from D-erythrose 4-phosphate: step 5/5.</text>
</comment>
<comment type="subunit">
    <text evidence="1">Homooctamer; tetramer of dimers.</text>
</comment>
<comment type="subcellular location">
    <subcellularLocation>
        <location evidence="1">Cytoplasm</location>
    </subcellularLocation>
</comment>
<comment type="similarity">
    <text evidence="1">Belongs to the PNP synthase family.</text>
</comment>
<feature type="chain" id="PRO_1000022389" description="Pyridoxine 5'-phosphate synthase">
    <location>
        <begin position="1"/>
        <end position="238"/>
    </location>
</feature>
<feature type="active site" description="Proton acceptor" evidence="1">
    <location>
        <position position="43"/>
    </location>
</feature>
<feature type="active site" description="Proton acceptor" evidence="1">
    <location>
        <position position="70"/>
    </location>
</feature>
<feature type="active site" description="Proton donor" evidence="1">
    <location>
        <position position="190"/>
    </location>
</feature>
<feature type="binding site" evidence="1">
    <location>
        <position position="7"/>
    </location>
    <ligand>
        <name>3-amino-2-oxopropyl phosphate</name>
        <dbReference type="ChEBI" id="CHEBI:57279"/>
    </ligand>
</feature>
<feature type="binding site" evidence="1">
    <location>
        <begin position="9"/>
        <end position="10"/>
    </location>
    <ligand>
        <name>1-deoxy-D-xylulose 5-phosphate</name>
        <dbReference type="ChEBI" id="CHEBI:57792"/>
    </ligand>
</feature>
<feature type="binding site" evidence="1">
    <location>
        <position position="18"/>
    </location>
    <ligand>
        <name>3-amino-2-oxopropyl phosphate</name>
        <dbReference type="ChEBI" id="CHEBI:57279"/>
    </ligand>
</feature>
<feature type="binding site" evidence="1">
    <location>
        <position position="45"/>
    </location>
    <ligand>
        <name>1-deoxy-D-xylulose 5-phosphate</name>
        <dbReference type="ChEBI" id="CHEBI:57792"/>
    </ligand>
</feature>
<feature type="binding site" evidence="1">
    <location>
        <position position="50"/>
    </location>
    <ligand>
        <name>1-deoxy-D-xylulose 5-phosphate</name>
        <dbReference type="ChEBI" id="CHEBI:57792"/>
    </ligand>
</feature>
<feature type="binding site" evidence="1">
    <location>
        <position position="100"/>
    </location>
    <ligand>
        <name>1-deoxy-D-xylulose 5-phosphate</name>
        <dbReference type="ChEBI" id="CHEBI:57792"/>
    </ligand>
</feature>
<feature type="binding site" evidence="1">
    <location>
        <position position="191"/>
    </location>
    <ligand>
        <name>3-amino-2-oxopropyl phosphate</name>
        <dbReference type="ChEBI" id="CHEBI:57279"/>
    </ligand>
</feature>
<feature type="binding site" evidence="1">
    <location>
        <begin position="212"/>
        <end position="213"/>
    </location>
    <ligand>
        <name>3-amino-2-oxopropyl phosphate</name>
        <dbReference type="ChEBI" id="CHEBI:57279"/>
    </ligand>
</feature>
<feature type="site" description="Transition state stabilizer" evidence="1">
    <location>
        <position position="151"/>
    </location>
</feature>
<protein>
    <recommendedName>
        <fullName evidence="1">Pyridoxine 5'-phosphate synthase</fullName>
        <shortName evidence="1">PNP synthase</shortName>
        <ecNumber evidence="1">2.6.99.2</ecNumber>
    </recommendedName>
</protein>
<keyword id="KW-0963">Cytoplasm</keyword>
<keyword id="KW-0664">Pyridoxine biosynthesis</keyword>
<keyword id="KW-0808">Transferase</keyword>
<evidence type="ECO:0000255" key="1">
    <source>
        <dbReference type="HAMAP-Rule" id="MF_00279"/>
    </source>
</evidence>
<organism>
    <name type="scientific">Prochlorococcus marinus (strain AS9601)</name>
    <dbReference type="NCBI Taxonomy" id="146891"/>
    <lineage>
        <taxon>Bacteria</taxon>
        <taxon>Bacillati</taxon>
        <taxon>Cyanobacteriota</taxon>
        <taxon>Cyanophyceae</taxon>
        <taxon>Synechococcales</taxon>
        <taxon>Prochlorococcaceae</taxon>
        <taxon>Prochlorococcus</taxon>
    </lineage>
</organism>
<reference key="1">
    <citation type="journal article" date="2007" name="PLoS Genet.">
        <title>Patterns and implications of gene gain and loss in the evolution of Prochlorococcus.</title>
        <authorList>
            <person name="Kettler G.C."/>
            <person name="Martiny A.C."/>
            <person name="Huang K."/>
            <person name="Zucker J."/>
            <person name="Coleman M.L."/>
            <person name="Rodrigue S."/>
            <person name="Chen F."/>
            <person name="Lapidus A."/>
            <person name="Ferriera S."/>
            <person name="Johnson J."/>
            <person name="Steglich C."/>
            <person name="Church G.M."/>
            <person name="Richardson P."/>
            <person name="Chisholm S.W."/>
        </authorList>
    </citation>
    <scope>NUCLEOTIDE SEQUENCE [LARGE SCALE GENOMIC DNA]</scope>
    <source>
        <strain>AS9601</strain>
    </source>
</reference>
<accession>A2BRT6</accession>
<gene>
    <name evidence="1" type="primary">pdxJ</name>
    <name type="ordered locus">A9601_12131</name>
</gene>